<sequence length="399" mass="42218">MNIHEHQAKAVLKSFGAPVAEGVAIFSADEAAAAADQLPGPLWVVKSQIHAGGRGKGKFKELGSDAKGGVRLAFSKEDVVKNAKEMLGNTLVTHQTGPEGKRVNRLYIEDGADIATELYCSLLVNRETGQVAFVVSTEGGMDIEEVAAETPEKIQTIDIDPSTGVTDASAAAVCDALKLEGQAREDMMGLAKILYTAFCEKDMSMLEINPLIVMDNGHVRVLDAKVSFDGNALFRHPDIMELRDTTEEDEKEIEASKYDLAYVALDGDIGCMVNGAGLAMATMDIIKLYGAEPANFLDVGGGATTEKVTAAFKIITADPNVKGILVNIFGGIMRCDVIAEGVVTAVKDVGLQVPLVVRLEGTNVAKGKQIINESGLNVIAADDLDDAAQKIVAAVKEAN</sequence>
<feature type="chain" id="PRO_1000082121" description="Succinate--CoA ligase [ADP-forming] subunit beta">
    <location>
        <begin position="1"/>
        <end position="399"/>
    </location>
</feature>
<feature type="domain" description="ATP-grasp" evidence="1">
    <location>
        <begin position="9"/>
        <end position="254"/>
    </location>
</feature>
<feature type="binding site" evidence="1">
    <location>
        <position position="46"/>
    </location>
    <ligand>
        <name>ATP</name>
        <dbReference type="ChEBI" id="CHEBI:30616"/>
    </ligand>
</feature>
<feature type="binding site" evidence="1">
    <location>
        <begin position="53"/>
        <end position="55"/>
    </location>
    <ligand>
        <name>ATP</name>
        <dbReference type="ChEBI" id="CHEBI:30616"/>
    </ligand>
</feature>
<feature type="binding site" evidence="1">
    <location>
        <position position="109"/>
    </location>
    <ligand>
        <name>ATP</name>
        <dbReference type="ChEBI" id="CHEBI:30616"/>
    </ligand>
</feature>
<feature type="binding site" evidence="1">
    <location>
        <position position="112"/>
    </location>
    <ligand>
        <name>ATP</name>
        <dbReference type="ChEBI" id="CHEBI:30616"/>
    </ligand>
</feature>
<feature type="binding site" evidence="1">
    <location>
        <position position="117"/>
    </location>
    <ligand>
        <name>ATP</name>
        <dbReference type="ChEBI" id="CHEBI:30616"/>
    </ligand>
</feature>
<feature type="binding site" evidence="1">
    <location>
        <position position="209"/>
    </location>
    <ligand>
        <name>Mg(2+)</name>
        <dbReference type="ChEBI" id="CHEBI:18420"/>
    </ligand>
</feature>
<feature type="binding site" evidence="1">
    <location>
        <position position="223"/>
    </location>
    <ligand>
        <name>Mg(2+)</name>
        <dbReference type="ChEBI" id="CHEBI:18420"/>
    </ligand>
</feature>
<feature type="binding site" evidence="1">
    <location>
        <position position="274"/>
    </location>
    <ligand>
        <name>substrate</name>
        <note>ligand shared with subunit alpha</note>
    </ligand>
</feature>
<feature type="binding site" evidence="1">
    <location>
        <begin position="331"/>
        <end position="333"/>
    </location>
    <ligand>
        <name>substrate</name>
        <note>ligand shared with subunit alpha</note>
    </ligand>
</feature>
<organism>
    <name type="scientific">Maricaulis maris (strain MCS10)</name>
    <name type="common">Caulobacter maris</name>
    <dbReference type="NCBI Taxonomy" id="394221"/>
    <lineage>
        <taxon>Bacteria</taxon>
        <taxon>Pseudomonadati</taxon>
        <taxon>Pseudomonadota</taxon>
        <taxon>Alphaproteobacteria</taxon>
        <taxon>Maricaulales</taxon>
        <taxon>Maricaulaceae</taxon>
        <taxon>Maricaulis</taxon>
    </lineage>
</organism>
<accession>Q0AKU3</accession>
<dbReference type="EC" id="6.2.1.5" evidence="1"/>
<dbReference type="EMBL" id="CP000449">
    <property type="protein sequence ID" value="ABI67100.1"/>
    <property type="molecule type" value="Genomic_DNA"/>
</dbReference>
<dbReference type="RefSeq" id="WP_011644744.1">
    <property type="nucleotide sequence ID" value="NC_008347.1"/>
</dbReference>
<dbReference type="SMR" id="Q0AKU3"/>
<dbReference type="STRING" id="394221.Mmar10_2819"/>
<dbReference type="KEGG" id="mmr:Mmar10_2819"/>
<dbReference type="eggNOG" id="COG0045">
    <property type="taxonomic scope" value="Bacteria"/>
</dbReference>
<dbReference type="HOGENOM" id="CLU_037430_0_2_5"/>
<dbReference type="OrthoDB" id="9802602at2"/>
<dbReference type="UniPathway" id="UPA00223">
    <property type="reaction ID" value="UER00999"/>
</dbReference>
<dbReference type="Proteomes" id="UP000001964">
    <property type="component" value="Chromosome"/>
</dbReference>
<dbReference type="GO" id="GO:0005829">
    <property type="term" value="C:cytosol"/>
    <property type="evidence" value="ECO:0007669"/>
    <property type="project" value="TreeGrafter"/>
</dbReference>
<dbReference type="GO" id="GO:0042709">
    <property type="term" value="C:succinate-CoA ligase complex"/>
    <property type="evidence" value="ECO:0007669"/>
    <property type="project" value="TreeGrafter"/>
</dbReference>
<dbReference type="GO" id="GO:0005524">
    <property type="term" value="F:ATP binding"/>
    <property type="evidence" value="ECO:0007669"/>
    <property type="project" value="UniProtKB-UniRule"/>
</dbReference>
<dbReference type="GO" id="GO:0000287">
    <property type="term" value="F:magnesium ion binding"/>
    <property type="evidence" value="ECO:0007669"/>
    <property type="project" value="UniProtKB-UniRule"/>
</dbReference>
<dbReference type="GO" id="GO:0004775">
    <property type="term" value="F:succinate-CoA ligase (ADP-forming) activity"/>
    <property type="evidence" value="ECO:0007669"/>
    <property type="project" value="UniProtKB-UniRule"/>
</dbReference>
<dbReference type="GO" id="GO:0004776">
    <property type="term" value="F:succinate-CoA ligase (GDP-forming) activity"/>
    <property type="evidence" value="ECO:0007669"/>
    <property type="project" value="RHEA"/>
</dbReference>
<dbReference type="GO" id="GO:0006104">
    <property type="term" value="P:succinyl-CoA metabolic process"/>
    <property type="evidence" value="ECO:0007669"/>
    <property type="project" value="TreeGrafter"/>
</dbReference>
<dbReference type="GO" id="GO:0006099">
    <property type="term" value="P:tricarboxylic acid cycle"/>
    <property type="evidence" value="ECO:0007669"/>
    <property type="project" value="UniProtKB-UniRule"/>
</dbReference>
<dbReference type="FunFam" id="3.30.1490.20:FF:000002">
    <property type="entry name" value="Succinate--CoA ligase [ADP-forming] subunit beta"/>
    <property type="match status" value="1"/>
</dbReference>
<dbReference type="FunFam" id="3.30.470.20:FF:000002">
    <property type="entry name" value="Succinate--CoA ligase [ADP-forming] subunit beta"/>
    <property type="match status" value="1"/>
</dbReference>
<dbReference type="FunFam" id="3.40.50.261:FF:000001">
    <property type="entry name" value="Succinate--CoA ligase [ADP-forming] subunit beta"/>
    <property type="match status" value="1"/>
</dbReference>
<dbReference type="Gene3D" id="3.30.1490.20">
    <property type="entry name" value="ATP-grasp fold, A domain"/>
    <property type="match status" value="1"/>
</dbReference>
<dbReference type="Gene3D" id="3.30.470.20">
    <property type="entry name" value="ATP-grasp fold, B domain"/>
    <property type="match status" value="1"/>
</dbReference>
<dbReference type="Gene3D" id="3.40.50.261">
    <property type="entry name" value="Succinyl-CoA synthetase domains"/>
    <property type="match status" value="1"/>
</dbReference>
<dbReference type="HAMAP" id="MF_00558">
    <property type="entry name" value="Succ_CoA_beta"/>
    <property type="match status" value="1"/>
</dbReference>
<dbReference type="InterPro" id="IPR011761">
    <property type="entry name" value="ATP-grasp"/>
</dbReference>
<dbReference type="InterPro" id="IPR013650">
    <property type="entry name" value="ATP-grasp_succ-CoA_synth-type"/>
</dbReference>
<dbReference type="InterPro" id="IPR013815">
    <property type="entry name" value="ATP_grasp_subdomain_1"/>
</dbReference>
<dbReference type="InterPro" id="IPR017866">
    <property type="entry name" value="Succ-CoA_synthase_bsu_CS"/>
</dbReference>
<dbReference type="InterPro" id="IPR005811">
    <property type="entry name" value="SUCC_ACL_C"/>
</dbReference>
<dbReference type="InterPro" id="IPR005809">
    <property type="entry name" value="Succ_CoA_ligase-like_bsu"/>
</dbReference>
<dbReference type="InterPro" id="IPR016102">
    <property type="entry name" value="Succinyl-CoA_synth-like"/>
</dbReference>
<dbReference type="NCBIfam" id="NF001913">
    <property type="entry name" value="PRK00696.1"/>
    <property type="match status" value="1"/>
</dbReference>
<dbReference type="NCBIfam" id="TIGR01016">
    <property type="entry name" value="sucCoAbeta"/>
    <property type="match status" value="1"/>
</dbReference>
<dbReference type="PANTHER" id="PTHR11815:SF10">
    <property type="entry name" value="SUCCINATE--COA LIGASE [GDP-FORMING] SUBUNIT BETA, MITOCHONDRIAL"/>
    <property type="match status" value="1"/>
</dbReference>
<dbReference type="PANTHER" id="PTHR11815">
    <property type="entry name" value="SUCCINYL-COA SYNTHETASE BETA CHAIN"/>
    <property type="match status" value="1"/>
</dbReference>
<dbReference type="Pfam" id="PF08442">
    <property type="entry name" value="ATP-grasp_2"/>
    <property type="match status" value="1"/>
</dbReference>
<dbReference type="Pfam" id="PF00549">
    <property type="entry name" value="Ligase_CoA"/>
    <property type="match status" value="1"/>
</dbReference>
<dbReference type="PIRSF" id="PIRSF001554">
    <property type="entry name" value="SucCS_beta"/>
    <property type="match status" value="1"/>
</dbReference>
<dbReference type="SUPFAM" id="SSF56059">
    <property type="entry name" value="Glutathione synthetase ATP-binding domain-like"/>
    <property type="match status" value="1"/>
</dbReference>
<dbReference type="SUPFAM" id="SSF52210">
    <property type="entry name" value="Succinyl-CoA synthetase domains"/>
    <property type="match status" value="1"/>
</dbReference>
<dbReference type="PROSITE" id="PS50975">
    <property type="entry name" value="ATP_GRASP"/>
    <property type="match status" value="1"/>
</dbReference>
<dbReference type="PROSITE" id="PS01217">
    <property type="entry name" value="SUCCINYL_COA_LIG_3"/>
    <property type="match status" value="1"/>
</dbReference>
<proteinExistence type="inferred from homology"/>
<gene>
    <name evidence="1" type="primary">sucC</name>
    <name type="ordered locus">Mmar10_2819</name>
</gene>
<evidence type="ECO:0000255" key="1">
    <source>
        <dbReference type="HAMAP-Rule" id="MF_00558"/>
    </source>
</evidence>
<keyword id="KW-0067">ATP-binding</keyword>
<keyword id="KW-0436">Ligase</keyword>
<keyword id="KW-0460">Magnesium</keyword>
<keyword id="KW-0479">Metal-binding</keyword>
<keyword id="KW-0547">Nucleotide-binding</keyword>
<keyword id="KW-1185">Reference proteome</keyword>
<keyword id="KW-0816">Tricarboxylic acid cycle</keyword>
<protein>
    <recommendedName>
        <fullName evidence="1">Succinate--CoA ligase [ADP-forming] subunit beta</fullName>
        <ecNumber evidence="1">6.2.1.5</ecNumber>
    </recommendedName>
    <alternativeName>
        <fullName evidence="1">Succinyl-CoA synthetase subunit beta</fullName>
        <shortName evidence="1">SCS-beta</shortName>
    </alternativeName>
</protein>
<reference key="1">
    <citation type="submission" date="2006-08" db="EMBL/GenBank/DDBJ databases">
        <title>Complete sequence of Maricaulis maris MCS10.</title>
        <authorList>
            <consortium name="US DOE Joint Genome Institute"/>
            <person name="Copeland A."/>
            <person name="Lucas S."/>
            <person name="Lapidus A."/>
            <person name="Barry K."/>
            <person name="Detter J.C."/>
            <person name="Glavina del Rio T."/>
            <person name="Hammon N."/>
            <person name="Israni S."/>
            <person name="Dalin E."/>
            <person name="Tice H."/>
            <person name="Pitluck S."/>
            <person name="Saunders E."/>
            <person name="Brettin T."/>
            <person name="Bruce D."/>
            <person name="Han C."/>
            <person name="Tapia R."/>
            <person name="Gilna P."/>
            <person name="Schmutz J."/>
            <person name="Larimer F."/>
            <person name="Land M."/>
            <person name="Hauser L."/>
            <person name="Kyrpides N."/>
            <person name="Mikhailova N."/>
            <person name="Viollier P."/>
            <person name="Stephens C."/>
            <person name="Richardson P."/>
        </authorList>
    </citation>
    <scope>NUCLEOTIDE SEQUENCE [LARGE SCALE GENOMIC DNA]</scope>
    <source>
        <strain>MCS10</strain>
    </source>
</reference>
<name>SUCC_MARMM</name>
<comment type="function">
    <text evidence="1">Succinyl-CoA synthetase functions in the citric acid cycle (TCA), coupling the hydrolysis of succinyl-CoA to the synthesis of either ATP or GTP and thus represents the only step of substrate-level phosphorylation in the TCA. The beta subunit provides nucleotide specificity of the enzyme and binds the substrate succinate, while the binding sites for coenzyme A and phosphate are found in the alpha subunit.</text>
</comment>
<comment type="catalytic activity">
    <reaction evidence="1">
        <text>succinate + ATP + CoA = succinyl-CoA + ADP + phosphate</text>
        <dbReference type="Rhea" id="RHEA:17661"/>
        <dbReference type="ChEBI" id="CHEBI:30031"/>
        <dbReference type="ChEBI" id="CHEBI:30616"/>
        <dbReference type="ChEBI" id="CHEBI:43474"/>
        <dbReference type="ChEBI" id="CHEBI:57287"/>
        <dbReference type="ChEBI" id="CHEBI:57292"/>
        <dbReference type="ChEBI" id="CHEBI:456216"/>
        <dbReference type="EC" id="6.2.1.5"/>
    </reaction>
    <physiologicalReaction direction="right-to-left" evidence="1">
        <dbReference type="Rhea" id="RHEA:17663"/>
    </physiologicalReaction>
</comment>
<comment type="catalytic activity">
    <reaction evidence="1">
        <text>GTP + succinate + CoA = succinyl-CoA + GDP + phosphate</text>
        <dbReference type="Rhea" id="RHEA:22120"/>
        <dbReference type="ChEBI" id="CHEBI:30031"/>
        <dbReference type="ChEBI" id="CHEBI:37565"/>
        <dbReference type="ChEBI" id="CHEBI:43474"/>
        <dbReference type="ChEBI" id="CHEBI:57287"/>
        <dbReference type="ChEBI" id="CHEBI:57292"/>
        <dbReference type="ChEBI" id="CHEBI:58189"/>
    </reaction>
    <physiologicalReaction direction="right-to-left" evidence="1">
        <dbReference type="Rhea" id="RHEA:22122"/>
    </physiologicalReaction>
</comment>
<comment type="cofactor">
    <cofactor evidence="1">
        <name>Mg(2+)</name>
        <dbReference type="ChEBI" id="CHEBI:18420"/>
    </cofactor>
    <text evidence="1">Binds 1 Mg(2+) ion per subunit.</text>
</comment>
<comment type="pathway">
    <text evidence="1">Carbohydrate metabolism; tricarboxylic acid cycle; succinate from succinyl-CoA (ligase route): step 1/1.</text>
</comment>
<comment type="subunit">
    <text evidence="1">Heterotetramer of two alpha and two beta subunits.</text>
</comment>
<comment type="similarity">
    <text evidence="1">Belongs to the succinate/malate CoA ligase beta subunit family.</text>
</comment>